<proteinExistence type="evidence at protein level"/>
<name>CATA_BACFR</name>
<sequence length="486" mass="55906">MENKKLTAANGRPIADNQNSQTAGPRGPIMLQDPWLIEKLAHFDREVIPERRMHAKGSGAYGTFTVTHDITKYTRAAIFSQVGKQTECFVRFSTVAGERGAADAERDIRGFAMKFYTEEGNWDLVGNNTPVFFLRDPLKFPDLNHAVKRDPRNNMRSANNNWDFWTLLPEALHQVTITMSPRGIPASYRHMHGFGSHTYSFLNAENKRIWVKFHLKTMQGIKNLTDQEAEAIIAKDRESHQRDLYESIERGDFPKWKFQIQLMTEEEADNYRINPFDLTKVWPHKDFPLQDVGILELNRNPENYFAEVEQSAFNPMNIVEGIGFSPDKMLQGRLFSYGDAQRYRLGVNSEQIPVNKPRCPFHAFHRDGAMRVDGNYGSAKGYEPNSYGEWQDSPEKKEPPLKVHGDVFNYNEREYDDDYYSQPGDLFRLMPADEQQLLFENTARAMGDAELFIKQRHVRNCYKADPAYGTGVAQALGIDLEEALKE</sequence>
<dbReference type="EC" id="1.11.1.6"/>
<dbReference type="EMBL" id="U18676">
    <property type="protein sequence ID" value="AAC43384.1"/>
    <property type="molecule type" value="Genomic_DNA"/>
</dbReference>
<dbReference type="EMBL" id="AP006841">
    <property type="protein sequence ID" value="BAD47995.1"/>
    <property type="molecule type" value="Genomic_DNA"/>
</dbReference>
<dbReference type="PIR" id="A57262">
    <property type="entry name" value="A57262"/>
</dbReference>
<dbReference type="RefSeq" id="WP_005785885.1">
    <property type="nucleotide sequence ID" value="NZ_UYXF01000002.1"/>
</dbReference>
<dbReference type="RefSeq" id="YP_098529.1">
    <property type="nucleotide sequence ID" value="NC_006347.1"/>
</dbReference>
<dbReference type="SMR" id="P45737"/>
<dbReference type="STRING" id="295405.BF1245"/>
<dbReference type="KEGG" id="bfr:BF1245"/>
<dbReference type="PATRIC" id="fig|295405.11.peg.1232"/>
<dbReference type="HOGENOM" id="CLU_010645_2_0_10"/>
<dbReference type="OrthoDB" id="9760293at2"/>
<dbReference type="SABIO-RK" id="P45737"/>
<dbReference type="Proteomes" id="UP000002197">
    <property type="component" value="Chromosome"/>
</dbReference>
<dbReference type="GO" id="GO:0005737">
    <property type="term" value="C:cytoplasm"/>
    <property type="evidence" value="ECO:0007669"/>
    <property type="project" value="TreeGrafter"/>
</dbReference>
<dbReference type="GO" id="GO:0004096">
    <property type="term" value="F:catalase activity"/>
    <property type="evidence" value="ECO:0007669"/>
    <property type="project" value="UniProtKB-EC"/>
</dbReference>
<dbReference type="GO" id="GO:0020037">
    <property type="term" value="F:heme binding"/>
    <property type="evidence" value="ECO:0007669"/>
    <property type="project" value="InterPro"/>
</dbReference>
<dbReference type="GO" id="GO:0046872">
    <property type="term" value="F:metal ion binding"/>
    <property type="evidence" value="ECO:0007669"/>
    <property type="project" value="UniProtKB-KW"/>
</dbReference>
<dbReference type="GO" id="GO:0042744">
    <property type="term" value="P:hydrogen peroxide catabolic process"/>
    <property type="evidence" value="ECO:0007669"/>
    <property type="project" value="UniProtKB-KW"/>
</dbReference>
<dbReference type="GO" id="GO:0042542">
    <property type="term" value="P:response to hydrogen peroxide"/>
    <property type="evidence" value="ECO:0007669"/>
    <property type="project" value="TreeGrafter"/>
</dbReference>
<dbReference type="CDD" id="cd08156">
    <property type="entry name" value="catalase_clade_3"/>
    <property type="match status" value="1"/>
</dbReference>
<dbReference type="FunFam" id="2.40.180.10:FF:000001">
    <property type="entry name" value="Catalase"/>
    <property type="match status" value="1"/>
</dbReference>
<dbReference type="Gene3D" id="2.40.180.10">
    <property type="entry name" value="Catalase core domain"/>
    <property type="match status" value="1"/>
</dbReference>
<dbReference type="InterPro" id="IPR018028">
    <property type="entry name" value="Catalase"/>
</dbReference>
<dbReference type="InterPro" id="IPR040333">
    <property type="entry name" value="Catalase_3"/>
</dbReference>
<dbReference type="InterPro" id="IPR024708">
    <property type="entry name" value="Catalase_AS"/>
</dbReference>
<dbReference type="InterPro" id="IPR024711">
    <property type="entry name" value="Catalase_clade1/3"/>
</dbReference>
<dbReference type="InterPro" id="IPR011614">
    <property type="entry name" value="Catalase_core"/>
</dbReference>
<dbReference type="InterPro" id="IPR002226">
    <property type="entry name" value="Catalase_haem_BS"/>
</dbReference>
<dbReference type="InterPro" id="IPR010582">
    <property type="entry name" value="Catalase_immune_responsive"/>
</dbReference>
<dbReference type="InterPro" id="IPR020835">
    <property type="entry name" value="Catalase_sf"/>
</dbReference>
<dbReference type="PANTHER" id="PTHR11465">
    <property type="entry name" value="CATALASE"/>
    <property type="match status" value="1"/>
</dbReference>
<dbReference type="PANTHER" id="PTHR11465:SF61">
    <property type="entry name" value="CATALASE"/>
    <property type="match status" value="1"/>
</dbReference>
<dbReference type="Pfam" id="PF00199">
    <property type="entry name" value="Catalase"/>
    <property type="match status" value="1"/>
</dbReference>
<dbReference type="Pfam" id="PF06628">
    <property type="entry name" value="Catalase-rel"/>
    <property type="match status" value="1"/>
</dbReference>
<dbReference type="PIRSF" id="PIRSF038928">
    <property type="entry name" value="Catalase_clade1-3"/>
    <property type="match status" value="1"/>
</dbReference>
<dbReference type="PRINTS" id="PR00067">
    <property type="entry name" value="CATALASE"/>
</dbReference>
<dbReference type="SMART" id="SM01060">
    <property type="entry name" value="Catalase"/>
    <property type="match status" value="1"/>
</dbReference>
<dbReference type="SUPFAM" id="SSF56634">
    <property type="entry name" value="Heme-dependent catalase-like"/>
    <property type="match status" value="1"/>
</dbReference>
<dbReference type="PROSITE" id="PS00437">
    <property type="entry name" value="CATALASE_1"/>
    <property type="match status" value="1"/>
</dbReference>
<dbReference type="PROSITE" id="PS00438">
    <property type="entry name" value="CATALASE_2"/>
    <property type="match status" value="1"/>
</dbReference>
<dbReference type="PROSITE" id="PS51402">
    <property type="entry name" value="CATALASE_3"/>
    <property type="match status" value="1"/>
</dbReference>
<feature type="chain" id="PRO_0000084976" description="Catalase">
    <location>
        <begin position="1"/>
        <end position="486"/>
    </location>
</feature>
<feature type="region of interest" description="Disordered" evidence="3">
    <location>
        <begin position="1"/>
        <end position="28"/>
    </location>
</feature>
<feature type="active site" evidence="2">
    <location>
        <position position="54"/>
    </location>
</feature>
<feature type="active site" evidence="2">
    <location>
        <position position="127"/>
    </location>
</feature>
<feature type="binding site" description="axial binding residue" evidence="1">
    <location>
        <position position="337"/>
    </location>
    <ligand>
        <name>heme</name>
        <dbReference type="ChEBI" id="CHEBI:30413"/>
    </ligand>
    <ligandPart>
        <name>Fe</name>
        <dbReference type="ChEBI" id="CHEBI:18248"/>
    </ligandPart>
</feature>
<gene>
    <name type="primary">katA</name>
    <name type="synonym">katB</name>
    <name type="ordered locus">BF1245</name>
</gene>
<organism>
    <name type="scientific">Bacteroides fragilis (strain YCH46)</name>
    <dbReference type="NCBI Taxonomy" id="295405"/>
    <lineage>
        <taxon>Bacteria</taxon>
        <taxon>Pseudomonadati</taxon>
        <taxon>Bacteroidota</taxon>
        <taxon>Bacteroidia</taxon>
        <taxon>Bacteroidales</taxon>
        <taxon>Bacteroidaceae</taxon>
        <taxon>Bacteroides</taxon>
    </lineage>
</organism>
<accession>P45737</accession>
<evidence type="ECO:0000250" key="1"/>
<evidence type="ECO:0000255" key="2">
    <source>
        <dbReference type="PROSITE-ProRule" id="PRU10013"/>
    </source>
</evidence>
<evidence type="ECO:0000256" key="3">
    <source>
        <dbReference type="SAM" id="MobiDB-lite"/>
    </source>
</evidence>
<evidence type="ECO:0000305" key="4"/>
<keyword id="KW-0903">Direct protein sequencing</keyword>
<keyword id="KW-0349">Heme</keyword>
<keyword id="KW-0376">Hydrogen peroxide</keyword>
<keyword id="KW-0408">Iron</keyword>
<keyword id="KW-0479">Metal-binding</keyword>
<keyword id="KW-0560">Oxidoreductase</keyword>
<keyword id="KW-0575">Peroxidase</keyword>
<protein>
    <recommendedName>
        <fullName>Catalase</fullName>
        <ecNumber>1.11.1.6</ecNumber>
    </recommendedName>
</protein>
<reference key="1">
    <citation type="journal article" date="1995" name="J. Bacteriol.">
        <title>Biochemical and genetic analyses of a catalase from the anaerobic bacterium Bacteroides fragilis.</title>
        <authorList>
            <person name="Rocha E.R."/>
            <person name="Smith C.J."/>
        </authorList>
    </citation>
    <scope>NUCLEOTIDE SEQUENCE [GENOMIC DNA]</scope>
    <scope>PROTEIN SEQUENCE OF 1-20</scope>
    <source>
        <strain>638</strain>
    </source>
</reference>
<reference key="2">
    <citation type="journal article" date="2004" name="Proc. Natl. Acad. Sci. U.S.A.">
        <title>Genomic analysis of Bacteroides fragilis reveals extensive DNA inversions regulating cell surface adaptation.</title>
        <authorList>
            <person name="Kuwahara T."/>
            <person name="Yamashita A."/>
            <person name="Hirakawa H."/>
            <person name="Nakayama H."/>
            <person name="Toh H."/>
            <person name="Okada N."/>
            <person name="Kuhara S."/>
            <person name="Hattori M."/>
            <person name="Hayashi T."/>
            <person name="Ohnishi Y."/>
        </authorList>
    </citation>
    <scope>NUCLEOTIDE SEQUENCE [LARGE SCALE GENOMIC DNA]</scope>
    <source>
        <strain>YCH46</strain>
    </source>
</reference>
<comment type="function">
    <text>Decomposes hydrogen peroxide into water and oxygen; serves to protect cells from the toxic effects of hydrogen peroxide. May be involved in aerotolerance of B.fragilis.</text>
</comment>
<comment type="catalytic activity">
    <reaction evidence="2">
        <text>2 H2O2 = O2 + 2 H2O</text>
        <dbReference type="Rhea" id="RHEA:20309"/>
        <dbReference type="ChEBI" id="CHEBI:15377"/>
        <dbReference type="ChEBI" id="CHEBI:15379"/>
        <dbReference type="ChEBI" id="CHEBI:16240"/>
        <dbReference type="EC" id="1.11.1.6"/>
    </reaction>
</comment>
<comment type="cofactor">
    <cofactor>
        <name>heme</name>
        <dbReference type="ChEBI" id="CHEBI:30413"/>
    </cofactor>
</comment>
<comment type="subunit">
    <text>Homodimer.</text>
</comment>
<comment type="induction">
    <text>Up-regulated by oxygenation and stationary phase.</text>
</comment>
<comment type="similarity">
    <text evidence="4">Belongs to the catalase family.</text>
</comment>